<proteinExistence type="inferred from homology"/>
<feature type="chain" id="PRO_1000076984" description="DNA-binding protein Fis">
    <location>
        <begin position="1"/>
        <end position="101"/>
    </location>
</feature>
<feature type="DNA-binding region" description="H-T-H motif" evidence="1">
    <location>
        <begin position="77"/>
        <end position="96"/>
    </location>
</feature>
<keyword id="KW-0010">Activator</keyword>
<keyword id="KW-0238">DNA-binding</keyword>
<keyword id="KW-0804">Transcription</keyword>
<keyword id="KW-0805">Transcription regulation</keyword>
<protein>
    <recommendedName>
        <fullName evidence="1">DNA-binding protein Fis</fullName>
    </recommendedName>
</protein>
<gene>
    <name evidence="1" type="primary">fis</name>
    <name type="ordered locus">Sbal195_4081</name>
</gene>
<accession>A9L5E7</accession>
<name>FIS_SHEB9</name>
<sequence length="101" mass="11390">MFDQTTNTEVHQLTVGKIETANGTIKPQLLRDAVKRAVTNFFAQLDGQEAQEVYEMVLSEVEAPLLDIIMQHTRGNQTRAANMLGINRGTLRKKLKKYGMN</sequence>
<reference key="1">
    <citation type="submission" date="2007-11" db="EMBL/GenBank/DDBJ databases">
        <title>Complete sequence of chromosome of Shewanella baltica OS195.</title>
        <authorList>
            <consortium name="US DOE Joint Genome Institute"/>
            <person name="Copeland A."/>
            <person name="Lucas S."/>
            <person name="Lapidus A."/>
            <person name="Barry K."/>
            <person name="Glavina del Rio T."/>
            <person name="Dalin E."/>
            <person name="Tice H."/>
            <person name="Pitluck S."/>
            <person name="Chain P."/>
            <person name="Malfatti S."/>
            <person name="Shin M."/>
            <person name="Vergez L."/>
            <person name="Schmutz J."/>
            <person name="Larimer F."/>
            <person name="Land M."/>
            <person name="Hauser L."/>
            <person name="Kyrpides N."/>
            <person name="Kim E."/>
            <person name="Brettar I."/>
            <person name="Rodrigues J."/>
            <person name="Konstantinidis K."/>
            <person name="Klappenbach J."/>
            <person name="Hofle M."/>
            <person name="Tiedje J."/>
            <person name="Richardson P."/>
        </authorList>
    </citation>
    <scope>NUCLEOTIDE SEQUENCE [LARGE SCALE GENOMIC DNA]</scope>
    <source>
        <strain>OS195</strain>
    </source>
</reference>
<organism>
    <name type="scientific">Shewanella baltica (strain OS195)</name>
    <dbReference type="NCBI Taxonomy" id="399599"/>
    <lineage>
        <taxon>Bacteria</taxon>
        <taxon>Pseudomonadati</taxon>
        <taxon>Pseudomonadota</taxon>
        <taxon>Gammaproteobacteria</taxon>
        <taxon>Alteromonadales</taxon>
        <taxon>Shewanellaceae</taxon>
        <taxon>Shewanella</taxon>
    </lineage>
</organism>
<dbReference type="EMBL" id="CP000891">
    <property type="protein sequence ID" value="ABX51241.1"/>
    <property type="molecule type" value="Genomic_DNA"/>
</dbReference>
<dbReference type="RefSeq" id="WP_006083371.1">
    <property type="nucleotide sequence ID" value="NC_009997.1"/>
</dbReference>
<dbReference type="SMR" id="A9L5E7"/>
<dbReference type="GeneID" id="94726394"/>
<dbReference type="KEGG" id="sbn:Sbal195_4081"/>
<dbReference type="HOGENOM" id="CLU_158040_3_3_6"/>
<dbReference type="Proteomes" id="UP000000770">
    <property type="component" value="Chromosome"/>
</dbReference>
<dbReference type="GO" id="GO:0003700">
    <property type="term" value="F:DNA-binding transcription factor activity"/>
    <property type="evidence" value="ECO:0007669"/>
    <property type="project" value="UniProtKB-UniRule"/>
</dbReference>
<dbReference type="GO" id="GO:0043565">
    <property type="term" value="F:sequence-specific DNA binding"/>
    <property type="evidence" value="ECO:0007669"/>
    <property type="project" value="InterPro"/>
</dbReference>
<dbReference type="FunFam" id="1.10.10.60:FF:000006">
    <property type="entry name" value="DNA-binding protein Fis"/>
    <property type="match status" value="1"/>
</dbReference>
<dbReference type="Gene3D" id="1.10.10.60">
    <property type="entry name" value="Homeodomain-like"/>
    <property type="match status" value="1"/>
</dbReference>
<dbReference type="HAMAP" id="MF_00166">
    <property type="entry name" value="DNA_binding_Fis"/>
    <property type="match status" value="1"/>
</dbReference>
<dbReference type="InterPro" id="IPR005412">
    <property type="entry name" value="Fis_DNA-bd"/>
</dbReference>
<dbReference type="InterPro" id="IPR009057">
    <property type="entry name" value="Homeodomain-like_sf"/>
</dbReference>
<dbReference type="InterPro" id="IPR002197">
    <property type="entry name" value="HTH_Fis"/>
</dbReference>
<dbReference type="InterPro" id="IPR050207">
    <property type="entry name" value="Trans_regulatory_Fis"/>
</dbReference>
<dbReference type="NCBIfam" id="NF001659">
    <property type="entry name" value="PRK00430.1"/>
    <property type="match status" value="1"/>
</dbReference>
<dbReference type="PANTHER" id="PTHR47918">
    <property type="entry name" value="DNA-BINDING PROTEIN FIS"/>
    <property type="match status" value="1"/>
</dbReference>
<dbReference type="PANTHER" id="PTHR47918:SF1">
    <property type="entry name" value="DNA-BINDING PROTEIN FIS"/>
    <property type="match status" value="1"/>
</dbReference>
<dbReference type="Pfam" id="PF02954">
    <property type="entry name" value="HTH_8"/>
    <property type="match status" value="1"/>
</dbReference>
<dbReference type="PIRSF" id="PIRSF002097">
    <property type="entry name" value="DNA-binding_Fis"/>
    <property type="match status" value="1"/>
</dbReference>
<dbReference type="PRINTS" id="PR01591">
    <property type="entry name" value="DNABINDNGFIS"/>
</dbReference>
<dbReference type="PRINTS" id="PR01590">
    <property type="entry name" value="HTHFIS"/>
</dbReference>
<dbReference type="SUPFAM" id="SSF46689">
    <property type="entry name" value="Homeodomain-like"/>
    <property type="match status" value="1"/>
</dbReference>
<evidence type="ECO:0000255" key="1">
    <source>
        <dbReference type="HAMAP-Rule" id="MF_00166"/>
    </source>
</evidence>
<comment type="function">
    <text evidence="1">Activates ribosomal RNA transcription. Plays a direct role in upstream activation of rRNA promoters.</text>
</comment>
<comment type="subunit">
    <text evidence="1">Homodimer.</text>
</comment>
<comment type="similarity">
    <text evidence="1">Belongs to the transcriptional regulatory Fis family.</text>
</comment>